<name>HBB1_LIPTU</name>
<comment type="function">
    <text evidence="3 5">Involved in oxygen transport from gills to the various peripheral tissues.</text>
</comment>
<comment type="subunit">
    <text evidence="3">Hb1 is a heterotetramer of two alpha-1 chains and two beta-1 chains.</text>
</comment>
<comment type="tissue specificity">
    <text evidence="5">Red blood cells.</text>
</comment>
<comment type="miscellaneous">
    <text>This fish has two hemoglobins: Hb1 (major) and Hb2. Hb1 has low oxygen affinity, it displays a pronounced Bohr effect, which is enhanced by ATP, and a pronounced Root effect.</text>
</comment>
<comment type="similarity">
    <text evidence="2">Belongs to the globin family.</text>
</comment>
<sequence>MVHWTDFERSTIKDIFAKIDYDCVGPAAFARCLIVYPWTQRYFGNFGNLFNAAAIIGNPNVAKHGITIMHGLERGVKNLDHLTETYEELSVLHSEKLHVDPDNFKLISDCLTIVVASRLGKAFTGEVQAALQKFLAVVVFSLGKQYH</sequence>
<organism>
    <name type="scientific">Liparis tunicatus</name>
    <name type="common">Kelp snailfish</name>
    <dbReference type="NCBI Taxonomy" id="420949"/>
    <lineage>
        <taxon>Eukaryota</taxon>
        <taxon>Metazoa</taxon>
        <taxon>Chordata</taxon>
        <taxon>Craniata</taxon>
        <taxon>Vertebrata</taxon>
        <taxon>Euteleostomi</taxon>
        <taxon>Actinopterygii</taxon>
        <taxon>Neopterygii</taxon>
        <taxon>Teleostei</taxon>
        <taxon>Neoteleostei</taxon>
        <taxon>Acanthomorphata</taxon>
        <taxon>Eupercaria</taxon>
        <taxon>Perciformes</taxon>
        <taxon>Cottioidei</taxon>
        <taxon>Cottales</taxon>
        <taxon>Liparidae</taxon>
        <taxon>Liparis</taxon>
    </lineage>
</organism>
<reference evidence="5" key="1">
    <citation type="journal article" date="2007" name="Gene">
        <title>Hemoglobin structure/function and globin-gene evolution in the Arctic fish Liparis tunicatus.</title>
        <authorList>
            <person name="Giordano D."/>
            <person name="Vergara A."/>
            <person name="Lee H.C."/>
            <person name="Peisach J."/>
            <person name="Balestrieri M."/>
            <person name="Mazzarella L."/>
            <person name="Parisi E."/>
            <person name="Prisco G."/>
            <person name="Verde C."/>
        </authorList>
    </citation>
    <scope>PROTEIN SEQUENCE OF 2-147</scope>
    <scope>FUNCTION</scope>
    <scope>SUBUNIT</scope>
    <source>
        <tissue evidence="3">Blood</tissue>
    </source>
</reference>
<keyword id="KW-0903">Direct protein sequencing</keyword>
<keyword id="KW-0349">Heme</keyword>
<keyword id="KW-0408">Iron</keyword>
<keyword id="KW-0479">Metal-binding</keyword>
<keyword id="KW-0561">Oxygen transport</keyword>
<keyword id="KW-0813">Transport</keyword>
<gene>
    <name evidence="1 4" type="primary">hbb1</name>
</gene>
<proteinExistence type="evidence at protein level"/>
<feature type="initiator methionine" description="Removed" evidence="3">
    <location>
        <position position="1"/>
    </location>
</feature>
<feature type="chain" id="PRO_0000312768" description="Hemoglobin subunit beta-1" evidence="3">
    <location>
        <begin position="2"/>
        <end position="147"/>
    </location>
</feature>
<feature type="domain" description="Globin" evidence="2">
    <location>
        <begin position="3"/>
        <end position="147"/>
    </location>
</feature>
<feature type="binding site" description="distal binding residue" evidence="1 2">
    <location>
        <position position="64"/>
    </location>
    <ligand>
        <name>heme b</name>
        <dbReference type="ChEBI" id="CHEBI:60344"/>
    </ligand>
    <ligandPart>
        <name>Fe</name>
        <dbReference type="ChEBI" id="CHEBI:18248"/>
    </ligandPart>
</feature>
<feature type="binding site" description="proximal binding residue" evidence="1 2">
    <location>
        <position position="93"/>
    </location>
    <ligand>
        <name>heme b</name>
        <dbReference type="ChEBI" id="CHEBI:60344"/>
    </ligand>
    <ligandPart>
        <name>Fe</name>
        <dbReference type="ChEBI" id="CHEBI:18248"/>
    </ligandPart>
</feature>
<protein>
    <recommendedName>
        <fullName>Hemoglobin subunit beta-1</fullName>
    </recommendedName>
    <alternativeName>
        <fullName>Beta-1-globin</fullName>
    </alternativeName>
    <alternativeName>
        <fullName>Hemoglobin beta-1 chain</fullName>
    </alternativeName>
</protein>
<evidence type="ECO:0000250" key="1">
    <source>
        <dbReference type="UniProtKB" id="P02142"/>
    </source>
</evidence>
<evidence type="ECO:0000255" key="2">
    <source>
        <dbReference type="PROSITE-ProRule" id="PRU00238"/>
    </source>
</evidence>
<evidence type="ECO:0000269" key="3">
    <source>
    </source>
</evidence>
<evidence type="ECO:0000303" key="4">
    <source>
    </source>
</evidence>
<evidence type="ECO:0000305" key="5"/>
<accession>P85082</accession>
<dbReference type="SMR" id="P85082"/>
<dbReference type="GO" id="GO:0072562">
    <property type="term" value="C:blood microparticle"/>
    <property type="evidence" value="ECO:0007669"/>
    <property type="project" value="TreeGrafter"/>
</dbReference>
<dbReference type="GO" id="GO:0031838">
    <property type="term" value="C:haptoglobin-hemoglobin complex"/>
    <property type="evidence" value="ECO:0007669"/>
    <property type="project" value="TreeGrafter"/>
</dbReference>
<dbReference type="GO" id="GO:0005833">
    <property type="term" value="C:hemoglobin complex"/>
    <property type="evidence" value="ECO:0007669"/>
    <property type="project" value="InterPro"/>
</dbReference>
<dbReference type="GO" id="GO:0031720">
    <property type="term" value="F:haptoglobin binding"/>
    <property type="evidence" value="ECO:0007669"/>
    <property type="project" value="TreeGrafter"/>
</dbReference>
<dbReference type="GO" id="GO:0020037">
    <property type="term" value="F:heme binding"/>
    <property type="evidence" value="ECO:0007669"/>
    <property type="project" value="InterPro"/>
</dbReference>
<dbReference type="GO" id="GO:0046872">
    <property type="term" value="F:metal ion binding"/>
    <property type="evidence" value="ECO:0007669"/>
    <property type="project" value="UniProtKB-KW"/>
</dbReference>
<dbReference type="GO" id="GO:0043177">
    <property type="term" value="F:organic acid binding"/>
    <property type="evidence" value="ECO:0007669"/>
    <property type="project" value="TreeGrafter"/>
</dbReference>
<dbReference type="GO" id="GO:0019825">
    <property type="term" value="F:oxygen binding"/>
    <property type="evidence" value="ECO:0007669"/>
    <property type="project" value="InterPro"/>
</dbReference>
<dbReference type="GO" id="GO:0005344">
    <property type="term" value="F:oxygen carrier activity"/>
    <property type="evidence" value="ECO:0007669"/>
    <property type="project" value="UniProtKB-KW"/>
</dbReference>
<dbReference type="GO" id="GO:0004601">
    <property type="term" value="F:peroxidase activity"/>
    <property type="evidence" value="ECO:0007669"/>
    <property type="project" value="TreeGrafter"/>
</dbReference>
<dbReference type="GO" id="GO:0042744">
    <property type="term" value="P:hydrogen peroxide catabolic process"/>
    <property type="evidence" value="ECO:0007669"/>
    <property type="project" value="TreeGrafter"/>
</dbReference>
<dbReference type="CDD" id="cd08925">
    <property type="entry name" value="Hb-beta-like"/>
    <property type="match status" value="1"/>
</dbReference>
<dbReference type="FunFam" id="1.10.490.10:FF:000001">
    <property type="entry name" value="Hemoglobin subunit beta"/>
    <property type="match status" value="1"/>
</dbReference>
<dbReference type="Gene3D" id="1.10.490.10">
    <property type="entry name" value="Globins"/>
    <property type="match status" value="1"/>
</dbReference>
<dbReference type="InterPro" id="IPR000971">
    <property type="entry name" value="Globin"/>
</dbReference>
<dbReference type="InterPro" id="IPR009050">
    <property type="entry name" value="Globin-like_sf"/>
</dbReference>
<dbReference type="InterPro" id="IPR012292">
    <property type="entry name" value="Globin/Proto"/>
</dbReference>
<dbReference type="InterPro" id="IPR002337">
    <property type="entry name" value="Hemoglobin_b"/>
</dbReference>
<dbReference type="InterPro" id="IPR050056">
    <property type="entry name" value="Hemoglobin_oxygen_transport"/>
</dbReference>
<dbReference type="PANTHER" id="PTHR11442">
    <property type="entry name" value="HEMOGLOBIN FAMILY MEMBER"/>
    <property type="match status" value="1"/>
</dbReference>
<dbReference type="PANTHER" id="PTHR11442:SF7">
    <property type="entry name" value="HEMOGLOBIN SUBUNIT EPSILON"/>
    <property type="match status" value="1"/>
</dbReference>
<dbReference type="Pfam" id="PF00042">
    <property type="entry name" value="Globin"/>
    <property type="match status" value="1"/>
</dbReference>
<dbReference type="PRINTS" id="PR00814">
    <property type="entry name" value="BETAHAEM"/>
</dbReference>
<dbReference type="SUPFAM" id="SSF46458">
    <property type="entry name" value="Globin-like"/>
    <property type="match status" value="1"/>
</dbReference>
<dbReference type="PROSITE" id="PS01033">
    <property type="entry name" value="GLOBIN"/>
    <property type="match status" value="1"/>
</dbReference>